<organism>
    <name type="scientific">Cupriavidus taiwanensis (strain DSM 17343 / BCRC 17206 / CCUG 44338 / CIP 107171 / LMG 19424 / R1)</name>
    <name type="common">Ralstonia taiwanensis (strain LMG 19424)</name>
    <dbReference type="NCBI Taxonomy" id="977880"/>
    <lineage>
        <taxon>Bacteria</taxon>
        <taxon>Pseudomonadati</taxon>
        <taxon>Pseudomonadota</taxon>
        <taxon>Betaproteobacteria</taxon>
        <taxon>Burkholderiales</taxon>
        <taxon>Burkholderiaceae</taxon>
        <taxon>Cupriavidus</taxon>
    </lineage>
</organism>
<evidence type="ECO:0000255" key="1">
    <source>
        <dbReference type="HAMAP-Rule" id="MF_00362"/>
    </source>
</evidence>
<evidence type="ECO:0000305" key="2"/>
<protein>
    <recommendedName>
        <fullName evidence="1">Large ribosomal subunit protein uL10</fullName>
    </recommendedName>
    <alternativeName>
        <fullName evidence="2">50S ribosomal protein L10</fullName>
    </alternativeName>
</protein>
<reference key="1">
    <citation type="journal article" date="2008" name="Genome Res.">
        <title>Genome sequence of the beta-rhizobium Cupriavidus taiwanensis and comparative genomics of rhizobia.</title>
        <authorList>
            <person name="Amadou C."/>
            <person name="Pascal G."/>
            <person name="Mangenot S."/>
            <person name="Glew M."/>
            <person name="Bontemps C."/>
            <person name="Capela D."/>
            <person name="Carrere S."/>
            <person name="Cruveiller S."/>
            <person name="Dossat C."/>
            <person name="Lajus A."/>
            <person name="Marchetti M."/>
            <person name="Poinsot V."/>
            <person name="Rouy Z."/>
            <person name="Servin B."/>
            <person name="Saad M."/>
            <person name="Schenowitz C."/>
            <person name="Barbe V."/>
            <person name="Batut J."/>
            <person name="Medigue C."/>
            <person name="Masson-Boivin C."/>
        </authorList>
    </citation>
    <scope>NUCLEOTIDE SEQUENCE [LARGE SCALE GENOMIC DNA]</scope>
    <source>
        <strain>DSM 17343 / BCRC 17206 / CCUG 44338 / CIP 107171 / LMG 19424 / R1</strain>
    </source>
</reference>
<gene>
    <name evidence="1" type="primary">rplJ</name>
    <name type="ordered locus">RALTA_A2961</name>
</gene>
<dbReference type="EMBL" id="CU633749">
    <property type="protein sequence ID" value="CAQ70883.1"/>
    <property type="molecule type" value="Genomic_DNA"/>
</dbReference>
<dbReference type="RefSeq" id="WP_012354152.1">
    <property type="nucleotide sequence ID" value="NC_010528.1"/>
</dbReference>
<dbReference type="SMR" id="B3R7T8"/>
<dbReference type="GeneID" id="29761590"/>
<dbReference type="KEGG" id="cti:RALTA_A2961"/>
<dbReference type="eggNOG" id="COG0244">
    <property type="taxonomic scope" value="Bacteria"/>
</dbReference>
<dbReference type="HOGENOM" id="CLU_092227_0_1_4"/>
<dbReference type="BioCyc" id="CTAI977880:RALTA_RS14430-MONOMER"/>
<dbReference type="Proteomes" id="UP000001692">
    <property type="component" value="Chromosome 1"/>
</dbReference>
<dbReference type="GO" id="GO:1990904">
    <property type="term" value="C:ribonucleoprotein complex"/>
    <property type="evidence" value="ECO:0007669"/>
    <property type="project" value="UniProtKB-KW"/>
</dbReference>
<dbReference type="GO" id="GO:0005840">
    <property type="term" value="C:ribosome"/>
    <property type="evidence" value="ECO:0007669"/>
    <property type="project" value="UniProtKB-KW"/>
</dbReference>
<dbReference type="GO" id="GO:0070180">
    <property type="term" value="F:large ribosomal subunit rRNA binding"/>
    <property type="evidence" value="ECO:0007669"/>
    <property type="project" value="UniProtKB-UniRule"/>
</dbReference>
<dbReference type="GO" id="GO:0006412">
    <property type="term" value="P:translation"/>
    <property type="evidence" value="ECO:0007669"/>
    <property type="project" value="UniProtKB-UniRule"/>
</dbReference>
<dbReference type="CDD" id="cd05797">
    <property type="entry name" value="Ribosomal_L10"/>
    <property type="match status" value="1"/>
</dbReference>
<dbReference type="Gene3D" id="3.30.70.1730">
    <property type="match status" value="1"/>
</dbReference>
<dbReference type="Gene3D" id="6.10.250.290">
    <property type="match status" value="1"/>
</dbReference>
<dbReference type="HAMAP" id="MF_00362">
    <property type="entry name" value="Ribosomal_uL10"/>
    <property type="match status" value="1"/>
</dbReference>
<dbReference type="InterPro" id="IPR001790">
    <property type="entry name" value="Ribosomal_uL10"/>
</dbReference>
<dbReference type="InterPro" id="IPR043141">
    <property type="entry name" value="Ribosomal_uL10-like_sf"/>
</dbReference>
<dbReference type="InterPro" id="IPR022973">
    <property type="entry name" value="Ribosomal_uL10_bac"/>
</dbReference>
<dbReference type="InterPro" id="IPR047865">
    <property type="entry name" value="Ribosomal_uL10_bac_type"/>
</dbReference>
<dbReference type="NCBIfam" id="NF000955">
    <property type="entry name" value="PRK00099.1-1"/>
    <property type="match status" value="1"/>
</dbReference>
<dbReference type="PANTHER" id="PTHR11560">
    <property type="entry name" value="39S RIBOSOMAL PROTEIN L10, MITOCHONDRIAL"/>
    <property type="match status" value="1"/>
</dbReference>
<dbReference type="Pfam" id="PF00466">
    <property type="entry name" value="Ribosomal_L10"/>
    <property type="match status" value="1"/>
</dbReference>
<dbReference type="SUPFAM" id="SSF160369">
    <property type="entry name" value="Ribosomal protein L10-like"/>
    <property type="match status" value="1"/>
</dbReference>
<sequence>MPLNIEDKKAVVAEVSAQVAKAQTIVVAEYRGIAVGDLTKLRAAARQQGVYLRVLKNTLARRAVEGTPFAGLAEQMTGPLIYGISEDAVASAKVLNDFAKTNDKLVLRAGSYDGKVLDAAAVKALASIPSRDELIAQLLGVMQAPVSGFARLLAALAAKKAEGAAPAEAEAAAEA</sequence>
<proteinExistence type="inferred from homology"/>
<feature type="chain" id="PRO_1000120943" description="Large ribosomal subunit protein uL10">
    <location>
        <begin position="1"/>
        <end position="175"/>
    </location>
</feature>
<accession>B3R7T8</accession>
<keyword id="KW-0687">Ribonucleoprotein</keyword>
<keyword id="KW-0689">Ribosomal protein</keyword>
<keyword id="KW-0694">RNA-binding</keyword>
<keyword id="KW-0699">rRNA-binding</keyword>
<name>RL10_CUPTR</name>
<comment type="function">
    <text evidence="1">Forms part of the ribosomal stalk, playing a central role in the interaction of the ribosome with GTP-bound translation factors.</text>
</comment>
<comment type="subunit">
    <text evidence="1">Part of the ribosomal stalk of the 50S ribosomal subunit. The N-terminus interacts with L11 and the large rRNA to form the base of the stalk. The C-terminus forms an elongated spine to which L12 dimers bind in a sequential fashion forming a multimeric L10(L12)X complex.</text>
</comment>
<comment type="similarity">
    <text evidence="1">Belongs to the universal ribosomal protein uL10 family.</text>
</comment>